<evidence type="ECO:0000255" key="1">
    <source>
        <dbReference type="HAMAP-Rule" id="MF_00074"/>
    </source>
</evidence>
<name>RSMG_GEOKA</name>
<protein>
    <recommendedName>
        <fullName evidence="1">Ribosomal RNA small subunit methyltransferase G</fullName>
        <ecNumber evidence="1">2.1.1.-</ecNumber>
    </recommendedName>
    <alternativeName>
        <fullName evidence="1">16S rRNA 7-methylguanosine methyltransferase</fullName>
        <shortName evidence="1">16S rRNA m7G methyltransferase</shortName>
    </alternativeName>
</protein>
<keyword id="KW-0963">Cytoplasm</keyword>
<keyword id="KW-0489">Methyltransferase</keyword>
<keyword id="KW-1185">Reference proteome</keyword>
<keyword id="KW-0698">rRNA processing</keyword>
<keyword id="KW-0949">S-adenosyl-L-methionine</keyword>
<keyword id="KW-0808">Transferase</keyword>
<accession>Q5KU59</accession>
<reference key="1">
    <citation type="journal article" date="2004" name="Nucleic Acids Res.">
        <title>Thermoadaptation trait revealed by the genome sequence of thermophilic Geobacillus kaustophilus.</title>
        <authorList>
            <person name="Takami H."/>
            <person name="Takaki Y."/>
            <person name="Chee G.-J."/>
            <person name="Nishi S."/>
            <person name="Shimamura S."/>
            <person name="Suzuki H."/>
            <person name="Matsui S."/>
            <person name="Uchiyama I."/>
        </authorList>
    </citation>
    <scope>NUCLEOTIDE SEQUENCE [LARGE SCALE GENOMIC DNA]</scope>
    <source>
        <strain>HTA426</strain>
    </source>
</reference>
<organism>
    <name type="scientific">Geobacillus kaustophilus (strain HTA426)</name>
    <dbReference type="NCBI Taxonomy" id="235909"/>
    <lineage>
        <taxon>Bacteria</taxon>
        <taxon>Bacillati</taxon>
        <taxon>Bacillota</taxon>
        <taxon>Bacilli</taxon>
        <taxon>Bacillales</taxon>
        <taxon>Anoxybacillaceae</taxon>
        <taxon>Geobacillus</taxon>
        <taxon>Geobacillus thermoleovorans group</taxon>
    </lineage>
</organism>
<comment type="function">
    <text evidence="1">Specifically methylates the N7 position of guanine in position 535 of 16S rRNA.</text>
</comment>
<comment type="subcellular location">
    <subcellularLocation>
        <location evidence="1">Cytoplasm</location>
    </subcellularLocation>
</comment>
<comment type="similarity">
    <text evidence="1">Belongs to the methyltransferase superfamily. RNA methyltransferase RsmG family.</text>
</comment>
<feature type="chain" id="PRO_0000184254" description="Ribosomal RNA small subunit methyltransferase G">
    <location>
        <begin position="1"/>
        <end position="238"/>
    </location>
</feature>
<feature type="binding site" evidence="1">
    <location>
        <position position="77"/>
    </location>
    <ligand>
        <name>S-adenosyl-L-methionine</name>
        <dbReference type="ChEBI" id="CHEBI:59789"/>
    </ligand>
</feature>
<feature type="binding site" evidence="1">
    <location>
        <position position="82"/>
    </location>
    <ligand>
        <name>S-adenosyl-L-methionine</name>
        <dbReference type="ChEBI" id="CHEBI:59789"/>
    </ligand>
</feature>
<feature type="binding site" evidence="1">
    <location>
        <begin position="128"/>
        <end position="129"/>
    </location>
    <ligand>
        <name>S-adenosyl-L-methionine</name>
        <dbReference type="ChEBI" id="CHEBI:59789"/>
    </ligand>
</feature>
<feature type="binding site" evidence="1">
    <location>
        <position position="147"/>
    </location>
    <ligand>
        <name>S-adenosyl-L-methionine</name>
        <dbReference type="ChEBI" id="CHEBI:59789"/>
    </ligand>
</feature>
<dbReference type="EC" id="2.1.1.-" evidence="1"/>
<dbReference type="EMBL" id="BA000043">
    <property type="protein sequence ID" value="BAD77777.1"/>
    <property type="molecule type" value="Genomic_DNA"/>
</dbReference>
<dbReference type="RefSeq" id="WP_011232955.1">
    <property type="nucleotide sequence ID" value="NC_006510.1"/>
</dbReference>
<dbReference type="SMR" id="Q5KU59"/>
<dbReference type="STRING" id="235909.GK3492"/>
<dbReference type="GeneID" id="32065369"/>
<dbReference type="KEGG" id="gka:GK3492"/>
<dbReference type="eggNOG" id="COG0357">
    <property type="taxonomic scope" value="Bacteria"/>
</dbReference>
<dbReference type="HOGENOM" id="CLU_065341_0_2_9"/>
<dbReference type="Proteomes" id="UP000001172">
    <property type="component" value="Chromosome"/>
</dbReference>
<dbReference type="GO" id="GO:0005829">
    <property type="term" value="C:cytosol"/>
    <property type="evidence" value="ECO:0007669"/>
    <property type="project" value="TreeGrafter"/>
</dbReference>
<dbReference type="GO" id="GO:0070043">
    <property type="term" value="F:rRNA (guanine-N7-)-methyltransferase activity"/>
    <property type="evidence" value="ECO:0007669"/>
    <property type="project" value="UniProtKB-UniRule"/>
</dbReference>
<dbReference type="FunFam" id="3.40.50.150:FF:000041">
    <property type="entry name" value="Ribosomal RNA small subunit methyltransferase G"/>
    <property type="match status" value="1"/>
</dbReference>
<dbReference type="Gene3D" id="3.40.50.150">
    <property type="entry name" value="Vaccinia Virus protein VP39"/>
    <property type="match status" value="1"/>
</dbReference>
<dbReference type="HAMAP" id="MF_00074">
    <property type="entry name" value="16SrRNA_methyltr_G"/>
    <property type="match status" value="1"/>
</dbReference>
<dbReference type="InterPro" id="IPR003682">
    <property type="entry name" value="rRNA_ssu_MeTfrase_G"/>
</dbReference>
<dbReference type="InterPro" id="IPR029063">
    <property type="entry name" value="SAM-dependent_MTases_sf"/>
</dbReference>
<dbReference type="NCBIfam" id="TIGR00138">
    <property type="entry name" value="rsmG_gidB"/>
    <property type="match status" value="1"/>
</dbReference>
<dbReference type="PANTHER" id="PTHR31760">
    <property type="entry name" value="S-ADENOSYL-L-METHIONINE-DEPENDENT METHYLTRANSFERASES SUPERFAMILY PROTEIN"/>
    <property type="match status" value="1"/>
</dbReference>
<dbReference type="PANTHER" id="PTHR31760:SF0">
    <property type="entry name" value="S-ADENOSYL-L-METHIONINE-DEPENDENT METHYLTRANSFERASES SUPERFAMILY PROTEIN"/>
    <property type="match status" value="1"/>
</dbReference>
<dbReference type="Pfam" id="PF02527">
    <property type="entry name" value="GidB"/>
    <property type="match status" value="1"/>
</dbReference>
<dbReference type="PIRSF" id="PIRSF003078">
    <property type="entry name" value="GidB"/>
    <property type="match status" value="1"/>
</dbReference>
<dbReference type="SUPFAM" id="SSF53335">
    <property type="entry name" value="S-adenosyl-L-methionine-dependent methyltransferases"/>
    <property type="match status" value="1"/>
</dbReference>
<gene>
    <name evidence="1" type="primary">rsmG</name>
    <name type="ordered locus">GK3492</name>
</gene>
<proteinExistence type="inferred from homology"/>
<sequence length="238" mass="26768">MEATQFQTMLEERGILLSSRALAQFERYYELLVEWNEKMNLTAITDKPGVYVKHFFDSVSPAFYYDFSAPLALCDVGSGAGFPSLPLKICFPHLRVSIVDSLQKRIRFLEHLITELGLADVALYHERAETFARQKGMRESFDVVTARAVARMPVLVELCLPLVKMGGTFIAMKAASALEELKEGNKAISVLGGEVTATETFTLPFDEGERTIIFIQKMRKTPNQYPRKPGTPNKQPIQ</sequence>